<proteinExistence type="inferred from homology"/>
<gene>
    <name type="primary">rpl2</name>
</gene>
<dbReference type="EMBL" id="AJ245645">
    <property type="protein sequence ID" value="CAB53116.1"/>
    <property type="molecule type" value="Genomic_DNA"/>
</dbReference>
<dbReference type="SMR" id="Q9TJQ5"/>
<dbReference type="GO" id="GO:0005762">
    <property type="term" value="C:mitochondrial large ribosomal subunit"/>
    <property type="evidence" value="ECO:0007669"/>
    <property type="project" value="TreeGrafter"/>
</dbReference>
<dbReference type="GO" id="GO:0009536">
    <property type="term" value="C:plastid"/>
    <property type="evidence" value="ECO:0007669"/>
    <property type="project" value="UniProtKB-SubCell"/>
</dbReference>
<dbReference type="GO" id="GO:0003723">
    <property type="term" value="F:RNA binding"/>
    <property type="evidence" value="ECO:0007669"/>
    <property type="project" value="InterPro"/>
</dbReference>
<dbReference type="GO" id="GO:0003735">
    <property type="term" value="F:structural constituent of ribosome"/>
    <property type="evidence" value="ECO:0007669"/>
    <property type="project" value="InterPro"/>
</dbReference>
<dbReference type="GO" id="GO:0016740">
    <property type="term" value="F:transferase activity"/>
    <property type="evidence" value="ECO:0007669"/>
    <property type="project" value="InterPro"/>
</dbReference>
<dbReference type="GO" id="GO:0032543">
    <property type="term" value="P:mitochondrial translation"/>
    <property type="evidence" value="ECO:0007669"/>
    <property type="project" value="TreeGrafter"/>
</dbReference>
<dbReference type="FunFam" id="2.30.30.30:FF:000001">
    <property type="entry name" value="50S ribosomal protein L2"/>
    <property type="match status" value="1"/>
</dbReference>
<dbReference type="FunFam" id="2.40.50.140:FF:000003">
    <property type="entry name" value="50S ribosomal protein L2"/>
    <property type="match status" value="1"/>
</dbReference>
<dbReference type="FunFam" id="4.10.950.10:FF:000001">
    <property type="entry name" value="50S ribosomal protein L2"/>
    <property type="match status" value="1"/>
</dbReference>
<dbReference type="Gene3D" id="2.30.30.30">
    <property type="match status" value="1"/>
</dbReference>
<dbReference type="Gene3D" id="2.40.50.140">
    <property type="entry name" value="Nucleic acid-binding proteins"/>
    <property type="match status" value="1"/>
</dbReference>
<dbReference type="Gene3D" id="4.10.950.10">
    <property type="entry name" value="Ribosomal protein L2, domain 3"/>
    <property type="match status" value="1"/>
</dbReference>
<dbReference type="HAMAP" id="MF_01320_B">
    <property type="entry name" value="Ribosomal_uL2_B"/>
    <property type="match status" value="1"/>
</dbReference>
<dbReference type="InterPro" id="IPR012340">
    <property type="entry name" value="NA-bd_OB-fold"/>
</dbReference>
<dbReference type="InterPro" id="IPR014722">
    <property type="entry name" value="Rib_uL2_dom2"/>
</dbReference>
<dbReference type="InterPro" id="IPR002171">
    <property type="entry name" value="Ribosomal_uL2"/>
</dbReference>
<dbReference type="InterPro" id="IPR005880">
    <property type="entry name" value="Ribosomal_uL2_bac/org-type"/>
</dbReference>
<dbReference type="InterPro" id="IPR022669">
    <property type="entry name" value="Ribosomal_uL2_C"/>
</dbReference>
<dbReference type="InterPro" id="IPR022671">
    <property type="entry name" value="Ribosomal_uL2_CS"/>
</dbReference>
<dbReference type="InterPro" id="IPR014726">
    <property type="entry name" value="Ribosomal_uL2_dom3"/>
</dbReference>
<dbReference type="InterPro" id="IPR022666">
    <property type="entry name" value="Ribosomal_uL2_RNA-bd_dom"/>
</dbReference>
<dbReference type="InterPro" id="IPR008991">
    <property type="entry name" value="Translation_prot_SH3-like_sf"/>
</dbReference>
<dbReference type="NCBIfam" id="TIGR01171">
    <property type="entry name" value="rplB_bact"/>
    <property type="match status" value="1"/>
</dbReference>
<dbReference type="PANTHER" id="PTHR13691:SF5">
    <property type="entry name" value="LARGE RIBOSOMAL SUBUNIT PROTEIN UL2M"/>
    <property type="match status" value="1"/>
</dbReference>
<dbReference type="PANTHER" id="PTHR13691">
    <property type="entry name" value="RIBOSOMAL PROTEIN L2"/>
    <property type="match status" value="1"/>
</dbReference>
<dbReference type="Pfam" id="PF00181">
    <property type="entry name" value="Ribosomal_L2"/>
    <property type="match status" value="1"/>
</dbReference>
<dbReference type="Pfam" id="PF03947">
    <property type="entry name" value="Ribosomal_L2_C"/>
    <property type="match status" value="1"/>
</dbReference>
<dbReference type="PIRSF" id="PIRSF002158">
    <property type="entry name" value="Ribosomal_L2"/>
    <property type="match status" value="1"/>
</dbReference>
<dbReference type="SMART" id="SM01383">
    <property type="entry name" value="Ribosomal_L2"/>
    <property type="match status" value="1"/>
</dbReference>
<dbReference type="SMART" id="SM01382">
    <property type="entry name" value="Ribosomal_L2_C"/>
    <property type="match status" value="1"/>
</dbReference>
<dbReference type="SUPFAM" id="SSF50249">
    <property type="entry name" value="Nucleic acid-binding proteins"/>
    <property type="match status" value="1"/>
</dbReference>
<dbReference type="SUPFAM" id="SSF50104">
    <property type="entry name" value="Translation proteins SH3-like domain"/>
    <property type="match status" value="1"/>
</dbReference>
<dbReference type="PROSITE" id="PS00467">
    <property type="entry name" value="RIBOSOMAL_L2"/>
    <property type="match status" value="1"/>
</dbReference>
<keyword id="KW-0934">Plastid</keyword>
<keyword id="KW-0687">Ribonucleoprotein</keyword>
<keyword id="KW-0689">Ribosomal protein</keyword>
<reference key="1">
    <citation type="journal article" date="2002" name="Mol. Genet. Genomics">
        <title>The genes encoding subunits of ATP synthase are conserved in the reduced plastid genome of the heterotrophic alga Prototheca wickerhamii.</title>
        <authorList>
            <person name="Knauf U."/>
            <person name="Hachtel W."/>
        </authorList>
    </citation>
    <scope>NUCLEOTIDE SEQUENCE [GENOMIC DNA]</scope>
    <source>
        <strain>263-11</strain>
    </source>
</reference>
<organism>
    <name type="scientific">Prototheca wickerhamii</name>
    <dbReference type="NCBI Taxonomy" id="3111"/>
    <lineage>
        <taxon>Eukaryota</taxon>
        <taxon>Viridiplantae</taxon>
        <taxon>Chlorophyta</taxon>
        <taxon>core chlorophytes</taxon>
        <taxon>Trebouxiophyceae</taxon>
        <taxon>Chlorellales</taxon>
        <taxon>Chlorellaceae</taxon>
        <taxon>Prototheca</taxon>
    </lineage>
</organism>
<comment type="subunit">
    <text evidence="1">Part of the 50S ribosomal subunit.</text>
</comment>
<comment type="subcellular location">
    <subcellularLocation>
        <location>Plastid</location>
    </subcellularLocation>
</comment>
<comment type="similarity">
    <text evidence="4">Belongs to the universal ribosomal protein uL2 family.</text>
</comment>
<geneLocation type="non-photosynthetic plastid"/>
<sequence>MAIRFFKPTTPGRRHGSVLNFDDLSSKKPEKKLTRGWSRAQGRNNKGRITTRHRGGGHKRLYREIDFIRNKIGTSAIVKSIEYDPNRTARIALVCYKDGEKRYILSPTGLKVGEMVIASPNAPITVGNTLPLYNIPLGTSVHNVELQPGAGGQLVRSAGSVAQIVAKEGQWATLHLPSGEYRLIPQKCWATVGRVGNLDNSNITLGKAGRSRWLSQRPHVRGSAMNPVDHPHGGGEGKAPIGRARPVSLWGKPALGVKTRKRKKFSNNLIINL</sequence>
<accession>Q9TJQ5</accession>
<feature type="chain" id="PRO_0000129699" description="Large ribosomal subunit protein uL2c">
    <location>
        <begin position="1"/>
        <end position="273"/>
    </location>
</feature>
<feature type="region of interest" description="Disordered" evidence="3">
    <location>
        <begin position="30"/>
        <end position="55"/>
    </location>
</feature>
<feature type="region of interest" description="Disordered" evidence="3">
    <location>
        <begin position="222"/>
        <end position="243"/>
    </location>
</feature>
<feature type="compositionally biased region" description="Basic residues" evidence="3">
    <location>
        <begin position="45"/>
        <end position="55"/>
    </location>
</feature>
<protein>
    <recommendedName>
        <fullName evidence="2">Large ribosomal subunit protein uL2c</fullName>
    </recommendedName>
    <alternativeName>
        <fullName evidence="4">50S ribosomal protein L2, plastid</fullName>
    </alternativeName>
</protein>
<name>RK2_PROWI</name>
<evidence type="ECO:0000250" key="1"/>
<evidence type="ECO:0000255" key="2">
    <source>
        <dbReference type="HAMAP-Rule" id="MF_01320"/>
    </source>
</evidence>
<evidence type="ECO:0000256" key="3">
    <source>
        <dbReference type="SAM" id="MobiDB-lite"/>
    </source>
</evidence>
<evidence type="ECO:0000305" key="4"/>